<accession>Q5JH16</accession>
<feature type="chain" id="PRO_0000119729" description="Glutamate--tRNA ligase">
    <location>
        <begin position="1"/>
        <end position="573"/>
    </location>
</feature>
<feature type="short sequence motif" description="'HIGH' region" evidence="1">
    <location>
        <begin position="107"/>
        <end position="117"/>
    </location>
</feature>
<protein>
    <recommendedName>
        <fullName evidence="1">Glutamate--tRNA ligase</fullName>
        <ecNumber evidence="1">6.1.1.17</ecNumber>
    </recommendedName>
    <alternativeName>
        <fullName evidence="1">Glutamyl-tRNA synthetase</fullName>
        <shortName evidence="1">GluRS</shortName>
    </alternativeName>
</protein>
<organism>
    <name type="scientific">Thermococcus kodakarensis (strain ATCC BAA-918 / JCM 12380 / KOD1)</name>
    <name type="common">Pyrococcus kodakaraensis (strain KOD1)</name>
    <dbReference type="NCBI Taxonomy" id="69014"/>
    <lineage>
        <taxon>Archaea</taxon>
        <taxon>Methanobacteriati</taxon>
        <taxon>Methanobacteriota</taxon>
        <taxon>Thermococci</taxon>
        <taxon>Thermococcales</taxon>
        <taxon>Thermococcaceae</taxon>
        <taxon>Thermococcus</taxon>
    </lineage>
</organism>
<gene>
    <name evidence="1" type="primary">gltX</name>
    <name type="ordered locus">TK1408</name>
</gene>
<comment type="function">
    <text evidence="1">Catalyzes the attachment of glutamate to tRNA(Glu) in a two-step reaction: glutamate is first activated by ATP to form Glu-AMP and then transferred to the acceptor end of tRNA(Glu).</text>
</comment>
<comment type="catalytic activity">
    <reaction evidence="1">
        <text>tRNA(Glu) + L-glutamate + ATP = L-glutamyl-tRNA(Glu) + AMP + diphosphate</text>
        <dbReference type="Rhea" id="RHEA:23540"/>
        <dbReference type="Rhea" id="RHEA-COMP:9663"/>
        <dbReference type="Rhea" id="RHEA-COMP:9680"/>
        <dbReference type="ChEBI" id="CHEBI:29985"/>
        <dbReference type="ChEBI" id="CHEBI:30616"/>
        <dbReference type="ChEBI" id="CHEBI:33019"/>
        <dbReference type="ChEBI" id="CHEBI:78442"/>
        <dbReference type="ChEBI" id="CHEBI:78520"/>
        <dbReference type="ChEBI" id="CHEBI:456215"/>
        <dbReference type="EC" id="6.1.1.17"/>
    </reaction>
</comment>
<comment type="subcellular location">
    <subcellularLocation>
        <location evidence="1">Cytoplasm</location>
    </subcellularLocation>
</comment>
<comment type="similarity">
    <text evidence="1">Belongs to the class-I aminoacyl-tRNA synthetase family. Glutamate--tRNA ligase type 2 subfamily.</text>
</comment>
<sequence length="573" mass="67143">MEEIRELVLKYALINAYTHRGKANPKAVIGKVLGENPELRKRAKEIIPLVNEVVNEVNSLSLEEQEAKLREIYPEFFEEKNEKKEEKKGLPPLPKAERGKVVTRFAPNPDGAFHLGNARAAILSHEYARMYDGKFILRFDDTDPKVKRPEPIFYEWIKEDLEWLGFRIDEIHIASDRLEIYYDYAEKLIKMGKAYVCTCPPEKFRELRDKGIACPHREEPVEVQLERWRKMLNGEYREGEAVVRIKTDLNHPNPAVRDWPALRIIDNPNHPRTGNKYRVWPLYNFASAIDDHELGVTHIFRGQEHAENETRQRYVYEYFGWEYPVTVHHGRLSIEGVILSKSKTRKGIEEGKYLGWDDPRLGTIRALRRRGIKPEAIRELIIEVGLKRSDTTISWDNLAAINRKIIEPIANRYFFVADPIPMYVEGAQEFTAEIPLHPDYPERGVRRLKFEPDKPVYVSKDDMELFKPGNFVRLKDLFNVEIMEVNENGIRARFHSFEYEVARENRWRMVHWVTEGKACEVWVPEGDELIIREGLLESDADVKVDDIVQFERFGFVRIDDVRPEKVVAIFAHK</sequence>
<evidence type="ECO:0000255" key="1">
    <source>
        <dbReference type="HAMAP-Rule" id="MF_02076"/>
    </source>
</evidence>
<name>SYE_THEKO</name>
<dbReference type="EC" id="6.1.1.17" evidence="1"/>
<dbReference type="EMBL" id="AP006878">
    <property type="protein sequence ID" value="BAD85597.1"/>
    <property type="molecule type" value="Genomic_DNA"/>
</dbReference>
<dbReference type="RefSeq" id="WP_011250359.1">
    <property type="nucleotide sequence ID" value="NC_006624.1"/>
</dbReference>
<dbReference type="SMR" id="Q5JH16"/>
<dbReference type="FunCoup" id="Q5JH16">
    <property type="interactions" value="261"/>
</dbReference>
<dbReference type="STRING" id="69014.TK1408"/>
<dbReference type="EnsemblBacteria" id="BAD85597">
    <property type="protein sequence ID" value="BAD85597"/>
    <property type="gene ID" value="TK1408"/>
</dbReference>
<dbReference type="GeneID" id="78447928"/>
<dbReference type="KEGG" id="tko:TK1408"/>
<dbReference type="PATRIC" id="fig|69014.16.peg.1370"/>
<dbReference type="eggNOG" id="arCOG04302">
    <property type="taxonomic scope" value="Archaea"/>
</dbReference>
<dbReference type="HOGENOM" id="CLU_001882_1_3_2"/>
<dbReference type="InParanoid" id="Q5JH16"/>
<dbReference type="OrthoDB" id="10470at2157"/>
<dbReference type="PhylomeDB" id="Q5JH16"/>
<dbReference type="Proteomes" id="UP000000536">
    <property type="component" value="Chromosome"/>
</dbReference>
<dbReference type="GO" id="GO:0005829">
    <property type="term" value="C:cytosol"/>
    <property type="evidence" value="ECO:0000318"/>
    <property type="project" value="GO_Central"/>
</dbReference>
<dbReference type="GO" id="GO:0005524">
    <property type="term" value="F:ATP binding"/>
    <property type="evidence" value="ECO:0007669"/>
    <property type="project" value="UniProtKB-UniRule"/>
</dbReference>
<dbReference type="GO" id="GO:0004818">
    <property type="term" value="F:glutamate-tRNA ligase activity"/>
    <property type="evidence" value="ECO:0007669"/>
    <property type="project" value="UniProtKB-UniRule"/>
</dbReference>
<dbReference type="GO" id="GO:0006424">
    <property type="term" value="P:glutamyl-tRNA aminoacylation"/>
    <property type="evidence" value="ECO:0007669"/>
    <property type="project" value="UniProtKB-UniRule"/>
</dbReference>
<dbReference type="CDD" id="cd09287">
    <property type="entry name" value="GluRS_non_core"/>
    <property type="match status" value="1"/>
</dbReference>
<dbReference type="FunFam" id="2.40.240.100:FF:000001">
    <property type="entry name" value="Glutamate--tRNA ligase"/>
    <property type="match status" value="1"/>
</dbReference>
<dbReference type="FunFam" id="2.40.240.10:FF:000033">
    <property type="entry name" value="Glutamate--tRNA ligase"/>
    <property type="match status" value="1"/>
</dbReference>
<dbReference type="FunFam" id="3.40.50.620:FF:000222">
    <property type="entry name" value="Glutamate--tRNA ligase"/>
    <property type="match status" value="1"/>
</dbReference>
<dbReference type="Gene3D" id="2.40.240.100">
    <property type="match status" value="1"/>
</dbReference>
<dbReference type="Gene3D" id="3.40.50.620">
    <property type="entry name" value="HUPs"/>
    <property type="match status" value="1"/>
</dbReference>
<dbReference type="Gene3D" id="2.40.240.10">
    <property type="entry name" value="Ribosomal Protein L25, Chain P"/>
    <property type="match status" value="1"/>
</dbReference>
<dbReference type="HAMAP" id="MF_02076">
    <property type="entry name" value="Glu_tRNA_synth_type2"/>
    <property type="match status" value="1"/>
</dbReference>
<dbReference type="InterPro" id="IPR050132">
    <property type="entry name" value="Gln/Glu-tRNA_Ligase"/>
</dbReference>
<dbReference type="InterPro" id="IPR004526">
    <property type="entry name" value="Glu-tRNA-synth_arc/euk"/>
</dbReference>
<dbReference type="InterPro" id="IPR000924">
    <property type="entry name" value="Glu/Gln-tRNA-synth"/>
</dbReference>
<dbReference type="InterPro" id="IPR020058">
    <property type="entry name" value="Glu/Gln-tRNA-synth_Ib_cat-dom"/>
</dbReference>
<dbReference type="InterPro" id="IPR020059">
    <property type="entry name" value="Glu/Gln-tRNA-synth_Ib_codon-bd"/>
</dbReference>
<dbReference type="InterPro" id="IPR020056">
    <property type="entry name" value="Rbsml_bL25/Gln-tRNA_synth_N"/>
</dbReference>
<dbReference type="InterPro" id="IPR011035">
    <property type="entry name" value="Ribosomal_bL25/Gln-tRNA_synth"/>
</dbReference>
<dbReference type="InterPro" id="IPR014729">
    <property type="entry name" value="Rossmann-like_a/b/a_fold"/>
</dbReference>
<dbReference type="InterPro" id="IPR049437">
    <property type="entry name" value="tRNA-synt_1c_C2"/>
</dbReference>
<dbReference type="NCBIfam" id="TIGR00463">
    <property type="entry name" value="gltX_arch"/>
    <property type="match status" value="1"/>
</dbReference>
<dbReference type="NCBIfam" id="NF003169">
    <property type="entry name" value="PRK04156.1"/>
    <property type="match status" value="1"/>
</dbReference>
<dbReference type="PANTHER" id="PTHR43097:SF5">
    <property type="entry name" value="GLUTAMATE--TRNA LIGASE"/>
    <property type="match status" value="1"/>
</dbReference>
<dbReference type="PANTHER" id="PTHR43097">
    <property type="entry name" value="GLUTAMINE-TRNA LIGASE"/>
    <property type="match status" value="1"/>
</dbReference>
<dbReference type="Pfam" id="PF00749">
    <property type="entry name" value="tRNA-synt_1c"/>
    <property type="match status" value="1"/>
</dbReference>
<dbReference type="Pfam" id="PF03950">
    <property type="entry name" value="tRNA-synt_1c_C"/>
    <property type="match status" value="1"/>
</dbReference>
<dbReference type="Pfam" id="PF20974">
    <property type="entry name" value="tRNA-synt_1c_C2"/>
    <property type="match status" value="1"/>
</dbReference>
<dbReference type="PRINTS" id="PR00987">
    <property type="entry name" value="TRNASYNTHGLU"/>
</dbReference>
<dbReference type="SUPFAM" id="SSF52374">
    <property type="entry name" value="Nucleotidylyl transferase"/>
    <property type="match status" value="1"/>
</dbReference>
<dbReference type="SUPFAM" id="SSF50715">
    <property type="entry name" value="Ribosomal protein L25-like"/>
    <property type="match status" value="1"/>
</dbReference>
<keyword id="KW-0030">Aminoacyl-tRNA synthetase</keyword>
<keyword id="KW-0067">ATP-binding</keyword>
<keyword id="KW-0963">Cytoplasm</keyword>
<keyword id="KW-0436">Ligase</keyword>
<keyword id="KW-0547">Nucleotide-binding</keyword>
<keyword id="KW-0648">Protein biosynthesis</keyword>
<keyword id="KW-1185">Reference proteome</keyword>
<proteinExistence type="inferred from homology"/>
<reference key="1">
    <citation type="journal article" date="2005" name="Genome Res.">
        <title>Complete genome sequence of the hyperthermophilic archaeon Thermococcus kodakaraensis KOD1 and comparison with Pyrococcus genomes.</title>
        <authorList>
            <person name="Fukui T."/>
            <person name="Atomi H."/>
            <person name="Kanai T."/>
            <person name="Matsumi R."/>
            <person name="Fujiwara S."/>
            <person name="Imanaka T."/>
        </authorList>
    </citation>
    <scope>NUCLEOTIDE SEQUENCE [LARGE SCALE GENOMIC DNA]</scope>
    <source>
        <strain>ATCC BAA-918 / JCM 12380 / KOD1</strain>
    </source>
</reference>